<sequence length="278" mass="30916">MCRRPDCGFSFSPGPVILLWCCLLLPIVSSAAVSVAPTATEKVPAECPELTRRCLLGEVFQGDKYESWLRPLVNVTGRDGPLSQLIRYRPVTPEAANSVLLDEAFLDTLALLYNNPDQLRALLTLLSSDTAPRWMTVMRGYSECGDGSPAVYTCVDDLCRGYDLTRLSYERSIFTEHVLGFELVPPSLFNVVVAIRNEATRTNRAVRLPVSTAAAPEGITLFYGLYNAVKEFCLRHQLDPPLLRHLDKYYAGLPPELKQTRVNLPAHSRYGPQAVDAR</sequence>
<gene>
    <name evidence="2" type="primary">gL</name>
    <name type="synonym">UL115</name>
</gene>
<proteinExistence type="inferred from homology"/>
<dbReference type="EMBL" id="U56911">
    <property type="protein sequence ID" value="AAA99163.1"/>
    <property type="molecule type" value="Genomic_DNA"/>
</dbReference>
<dbReference type="SMR" id="Q68666"/>
<dbReference type="GO" id="GO:0044177">
    <property type="term" value="C:host cell Golgi apparatus"/>
    <property type="evidence" value="ECO:0007669"/>
    <property type="project" value="UniProtKB-SubCell"/>
</dbReference>
<dbReference type="GO" id="GO:0020002">
    <property type="term" value="C:host cell plasma membrane"/>
    <property type="evidence" value="ECO:0007669"/>
    <property type="project" value="UniProtKB-SubCell"/>
</dbReference>
<dbReference type="GO" id="GO:0016020">
    <property type="term" value="C:membrane"/>
    <property type="evidence" value="ECO:0007669"/>
    <property type="project" value="UniProtKB-KW"/>
</dbReference>
<dbReference type="GO" id="GO:0019031">
    <property type="term" value="C:viral envelope"/>
    <property type="evidence" value="ECO:0007669"/>
    <property type="project" value="UniProtKB-UniRule"/>
</dbReference>
<dbReference type="GO" id="GO:0055036">
    <property type="term" value="C:virion membrane"/>
    <property type="evidence" value="ECO:0007669"/>
    <property type="project" value="UniProtKB-SubCell"/>
</dbReference>
<dbReference type="GO" id="GO:0098670">
    <property type="term" value="P:entry receptor-mediated virion attachment to host cell"/>
    <property type="evidence" value="ECO:0007669"/>
    <property type="project" value="UniProtKB-KW"/>
</dbReference>
<dbReference type="GO" id="GO:0019064">
    <property type="term" value="P:fusion of virus membrane with host plasma membrane"/>
    <property type="evidence" value="ECO:0007669"/>
    <property type="project" value="UniProtKB-UniRule"/>
</dbReference>
<dbReference type="GO" id="GO:0046718">
    <property type="term" value="P:symbiont entry into host cell"/>
    <property type="evidence" value="ECO:0007669"/>
    <property type="project" value="UniProtKB-KW"/>
</dbReference>
<dbReference type="HAMAP" id="MF_04036">
    <property type="entry name" value="HSV_GL_betahv"/>
    <property type="match status" value="1"/>
</dbReference>
<dbReference type="InterPro" id="IPR002689">
    <property type="entry name" value="Cytomegalo_gL"/>
</dbReference>
<dbReference type="Pfam" id="PF01801">
    <property type="entry name" value="Cytomega_gL"/>
    <property type="match status" value="1"/>
</dbReference>
<dbReference type="PROSITE" id="PS52025">
    <property type="entry name" value="GL_BHV"/>
    <property type="match status" value="1"/>
</dbReference>
<organism>
    <name type="scientific">Human cytomegalovirus (strain PT)</name>
    <name type="common">HHV-5</name>
    <name type="synonym">Human herpesvirus 5</name>
    <dbReference type="NCBI Taxonomy" id="69169"/>
    <lineage>
        <taxon>Viruses</taxon>
        <taxon>Duplodnaviria</taxon>
        <taxon>Heunggongvirae</taxon>
        <taxon>Peploviricota</taxon>
        <taxon>Herviviricetes</taxon>
        <taxon>Herpesvirales</taxon>
        <taxon>Orthoherpesviridae</taxon>
        <taxon>Betaherpesvirinae</taxon>
        <taxon>Cytomegalovirus</taxon>
        <taxon>Cytomegalovirus humanbeta5</taxon>
        <taxon>Human cytomegalovirus</taxon>
    </lineage>
</organism>
<evidence type="ECO:0000250" key="1">
    <source>
        <dbReference type="UniProtKB" id="F5HCH8"/>
    </source>
</evidence>
<evidence type="ECO:0000255" key="2">
    <source>
        <dbReference type="HAMAP-Rule" id="MF_04036"/>
    </source>
</evidence>
<evidence type="ECO:0000255" key="3">
    <source>
        <dbReference type="PROSITE-ProRule" id="PRU01369"/>
    </source>
</evidence>
<accession>Q68666</accession>
<comment type="function">
    <text evidence="1 2">The heterodimer glycoprotein H-glycoprotein L is required for the fusion of viral and plasma membranes leading to virus entry into the host cell. Acts as a functional inhibitor of gH and maintains gH in an inhibited form. Upon binding to host integrins, gL dissociates from gH leading to activation of the viral fusion glycoproteins gB and gH (By similarity). In human cytomegalovirus, forms two distincts complexes to mediate viral entry, a trimer and a pentamer at the surface of the virion envelope. The gH-gL-gO trimer is required for infection in fibroblasts by interacting with host PDGFRA. The gH-gL-UL128-UL130-UL131A pentamer is essential for viral entry in epithelial, endothelial and myeloid cells via interaction with host NRP2 (By similarity).</text>
</comment>
<comment type="subunit">
    <text evidence="1 2">Interacts with glycoprotein H (gH); this interaction is necessary for the correct processing and cell surface expression of gH (By similarity). Forms the envelope pentamer complex (PC) composed of gH, gL, UL128, UL130, and UL131A. The pentamer interacts with host NRP2. Forms the envelope trimer complex composed of gH, gL, and gO. The trimer interacts with host PDGFRA (By similarity).</text>
</comment>
<comment type="subcellular location">
    <subcellularLocation>
        <location evidence="2">Virion membrane</location>
        <topology evidence="2">Peripheral membrane protein</topology>
        <orientation evidence="2">Extracellular side</orientation>
    </subcellularLocation>
    <subcellularLocation>
        <location evidence="2">Host cell membrane</location>
        <topology evidence="2">Peripheral membrane protein</topology>
        <orientation evidence="2">Extracellular side</orientation>
    </subcellularLocation>
    <subcellularLocation>
        <location evidence="2">Host Golgi apparatus</location>
        <location evidence="2">Host trans-Golgi network</location>
    </subcellularLocation>
    <text evidence="2">gL associates with the extravirion surface through its binding to gH. During virion morphogenesis, this protein probably accumulates in the host trans-Golgi where secondary envelopment occurs.</text>
</comment>
<comment type="similarity">
    <text evidence="3">Belongs to the herpesviridae glycoprotein L (gL) family. Betaherpesvirinae gL subfamily.</text>
</comment>
<protein>
    <recommendedName>
        <fullName evidence="2">Envelope glycoprotein L</fullName>
        <shortName evidence="2">gL</shortName>
    </recommendedName>
</protein>
<keyword id="KW-1015">Disulfide bond</keyword>
<keyword id="KW-1169">Fusion of virus membrane with host cell membrane</keyword>
<keyword id="KW-1168">Fusion of virus membrane with host membrane</keyword>
<keyword id="KW-0325">Glycoprotein</keyword>
<keyword id="KW-1032">Host cell membrane</keyword>
<keyword id="KW-1040">Host Golgi apparatus</keyword>
<keyword id="KW-1043">Host membrane</keyword>
<keyword id="KW-0945">Host-virus interaction</keyword>
<keyword id="KW-0472">Membrane</keyword>
<keyword id="KW-0732">Signal</keyword>
<keyword id="KW-1161">Viral attachment to host cell</keyword>
<keyword id="KW-1234">Viral attachment to host entry receptor</keyword>
<keyword id="KW-0261">Viral envelope protein</keyword>
<keyword id="KW-1162">Viral penetration into host cytoplasm</keyword>
<keyword id="KW-0946">Virion</keyword>
<keyword id="KW-1160">Virus entry into host cell</keyword>
<reference key="1">
    <citation type="submission" date="1996-04" db="EMBL/GenBank/DDBJ databases">
        <authorList>
            <person name="Milne R.S.B."/>
            <person name="Mathers K.E."/>
            <person name="Booth J.C."/>
        </authorList>
    </citation>
    <scope>NUCLEOTIDE SEQUENCE [GENOMIC DNA]</scope>
</reference>
<name>GL_HCMVP</name>
<organismHost>
    <name type="scientific">Homo sapiens</name>
    <name type="common">Human</name>
    <dbReference type="NCBI Taxonomy" id="9606"/>
</organismHost>
<feature type="signal peptide" evidence="2">
    <location>
        <begin position="1"/>
        <end position="30"/>
    </location>
</feature>
<feature type="chain" id="PRO_0000038279" description="Envelope glycoprotein L" evidence="2">
    <location>
        <begin position="31"/>
        <end position="278"/>
    </location>
</feature>
<feature type="domain" description="gL betaherpesvirus-type" evidence="3">
    <location>
        <begin position="43"/>
        <end position="256"/>
    </location>
</feature>
<feature type="disulfide bond" description="Interchain" evidence="3">
    <location>
        <position position="47"/>
    </location>
</feature>
<feature type="disulfide bond" description="Interchain" evidence="3">
    <location>
        <position position="54"/>
    </location>
</feature>
<feature type="disulfide bond" description="Interchain" evidence="3">
    <location>
        <position position="144"/>
    </location>
</feature>
<feature type="disulfide bond" evidence="3">
    <location>
        <begin position="154"/>
        <end position="159"/>
    </location>
</feature>